<dbReference type="EMBL" id="AE000520">
    <property type="protein sequence ID" value="AAC65005.1"/>
    <property type="molecule type" value="Genomic_DNA"/>
</dbReference>
<dbReference type="PIR" id="C71378">
    <property type="entry name" value="C71378"/>
</dbReference>
<dbReference type="RefSeq" id="WP_010881454.1">
    <property type="nucleotide sequence ID" value="NC_021490.2"/>
</dbReference>
<dbReference type="SMR" id="O83050"/>
<dbReference type="IntAct" id="O83050">
    <property type="interactions" value="4"/>
</dbReference>
<dbReference type="STRING" id="243276.TP_0004"/>
<dbReference type="EnsemblBacteria" id="AAC65005">
    <property type="protein sequence ID" value="AAC65005"/>
    <property type="gene ID" value="TP_0004"/>
</dbReference>
<dbReference type="KEGG" id="tpa:TP_0004"/>
<dbReference type="KEGG" id="tpw:TPANIC_0004"/>
<dbReference type="eggNOG" id="COG5512">
    <property type="taxonomic scope" value="Bacteria"/>
</dbReference>
<dbReference type="HOGENOM" id="CLU_1786045_0_0_12"/>
<dbReference type="OrthoDB" id="359882at2"/>
<dbReference type="Proteomes" id="UP000000811">
    <property type="component" value="Chromosome"/>
</dbReference>
<dbReference type="InterPro" id="IPR007922">
    <property type="entry name" value="DciA-like"/>
</dbReference>
<dbReference type="Pfam" id="PF05258">
    <property type="entry name" value="DciA"/>
    <property type="match status" value="1"/>
</dbReference>
<sequence>MNNGVNKLSDLLVLTTEYIQASYETEAFDAHREWVCIVGNPVALHSTLVDIRNGKVVVKVTHPGWAQYLLLKKDEIVHALRRRYPSLGVTGMSTYVDSTSRTPSAKKDMQGLSVSEKQTRPVPELAEVFEQLRTLFQVKTEEPSH</sequence>
<keyword id="KW-1185">Reference proteome</keyword>
<name>Y004_TREPA</name>
<evidence type="ECO:0000256" key="1">
    <source>
        <dbReference type="SAM" id="MobiDB-lite"/>
    </source>
</evidence>
<proteinExistence type="evidence at protein level"/>
<feature type="chain" id="PRO_0000202170" description="Uncharacterized protein TP_0004">
    <location>
        <begin position="1"/>
        <end position="145"/>
    </location>
</feature>
<feature type="region of interest" description="Disordered" evidence="1">
    <location>
        <begin position="95"/>
        <end position="119"/>
    </location>
</feature>
<reference key="1">
    <citation type="journal article" date="1998" name="Science">
        <title>Complete genome sequence of Treponema pallidum, the syphilis spirochete.</title>
        <authorList>
            <person name="Fraser C.M."/>
            <person name="Norris S.J."/>
            <person name="Weinstock G.M."/>
            <person name="White O."/>
            <person name="Sutton G.G."/>
            <person name="Dodson R.J."/>
            <person name="Gwinn M.L."/>
            <person name="Hickey E.K."/>
            <person name="Clayton R.A."/>
            <person name="Ketchum K.A."/>
            <person name="Sodergren E."/>
            <person name="Hardham J.M."/>
            <person name="McLeod M.P."/>
            <person name="Salzberg S.L."/>
            <person name="Peterson J.D."/>
            <person name="Khalak H.G."/>
            <person name="Richardson D.L."/>
            <person name="Howell J.K."/>
            <person name="Chidambaram M."/>
            <person name="Utterback T.R."/>
            <person name="McDonald L.A."/>
            <person name="Artiach P."/>
            <person name="Bowman C."/>
            <person name="Cotton M.D."/>
            <person name="Fujii C."/>
            <person name="Garland S.A."/>
            <person name="Hatch B."/>
            <person name="Horst K."/>
            <person name="Roberts K.M."/>
            <person name="Sandusky M."/>
            <person name="Weidman J.F."/>
            <person name="Smith H.O."/>
            <person name="Venter J.C."/>
        </authorList>
    </citation>
    <scope>NUCLEOTIDE SEQUENCE [LARGE SCALE GENOMIC DNA]</scope>
    <source>
        <strain>Nichols</strain>
    </source>
</reference>
<gene>
    <name type="ordered locus">TP_0004</name>
</gene>
<protein>
    <recommendedName>
        <fullName>Uncharacterized protein TP_0004</fullName>
    </recommendedName>
</protein>
<comment type="interaction">
    <interactant intactId="EBI-1584836">
        <id>O83050</id>
    </interactant>
    <interactant intactId="EBI-1585657">
        <id>O08399</id>
        <label>gyrB</label>
    </interactant>
    <organismsDiffer>false</organismsDiffer>
    <experiments>2</experiments>
</comment>
<organism>
    <name type="scientific">Treponema pallidum (strain Nichols)</name>
    <dbReference type="NCBI Taxonomy" id="243276"/>
    <lineage>
        <taxon>Bacteria</taxon>
        <taxon>Pseudomonadati</taxon>
        <taxon>Spirochaetota</taxon>
        <taxon>Spirochaetia</taxon>
        <taxon>Spirochaetales</taxon>
        <taxon>Treponemataceae</taxon>
        <taxon>Treponema</taxon>
    </lineage>
</organism>
<accession>O83050</accession>